<comment type="function">
    <text evidence="1">Condenses 4-methyl-5-(beta-hydroxyethyl)thiazole monophosphate (THZ-P) and 2-methyl-4-amino-5-hydroxymethyl pyrimidine pyrophosphate (HMP-PP) to form thiamine monophosphate (TMP).</text>
</comment>
<comment type="catalytic activity">
    <reaction evidence="1">
        <text>2-[(2R,5Z)-2-carboxy-4-methylthiazol-5(2H)-ylidene]ethyl phosphate + 4-amino-2-methyl-5-(diphosphooxymethyl)pyrimidine + 2 H(+) = thiamine phosphate + CO2 + diphosphate</text>
        <dbReference type="Rhea" id="RHEA:47844"/>
        <dbReference type="ChEBI" id="CHEBI:15378"/>
        <dbReference type="ChEBI" id="CHEBI:16526"/>
        <dbReference type="ChEBI" id="CHEBI:33019"/>
        <dbReference type="ChEBI" id="CHEBI:37575"/>
        <dbReference type="ChEBI" id="CHEBI:57841"/>
        <dbReference type="ChEBI" id="CHEBI:62899"/>
        <dbReference type="EC" id="2.5.1.3"/>
    </reaction>
</comment>
<comment type="catalytic activity">
    <reaction evidence="1">
        <text>2-(2-carboxy-4-methylthiazol-5-yl)ethyl phosphate + 4-amino-2-methyl-5-(diphosphooxymethyl)pyrimidine + 2 H(+) = thiamine phosphate + CO2 + diphosphate</text>
        <dbReference type="Rhea" id="RHEA:47848"/>
        <dbReference type="ChEBI" id="CHEBI:15378"/>
        <dbReference type="ChEBI" id="CHEBI:16526"/>
        <dbReference type="ChEBI" id="CHEBI:33019"/>
        <dbReference type="ChEBI" id="CHEBI:37575"/>
        <dbReference type="ChEBI" id="CHEBI:57841"/>
        <dbReference type="ChEBI" id="CHEBI:62890"/>
        <dbReference type="EC" id="2.5.1.3"/>
    </reaction>
</comment>
<comment type="catalytic activity">
    <reaction evidence="1">
        <text>4-methyl-5-(2-phosphooxyethyl)-thiazole + 4-amino-2-methyl-5-(diphosphooxymethyl)pyrimidine + H(+) = thiamine phosphate + diphosphate</text>
        <dbReference type="Rhea" id="RHEA:22328"/>
        <dbReference type="ChEBI" id="CHEBI:15378"/>
        <dbReference type="ChEBI" id="CHEBI:33019"/>
        <dbReference type="ChEBI" id="CHEBI:37575"/>
        <dbReference type="ChEBI" id="CHEBI:57841"/>
        <dbReference type="ChEBI" id="CHEBI:58296"/>
        <dbReference type="EC" id="2.5.1.3"/>
    </reaction>
</comment>
<comment type="cofactor">
    <cofactor evidence="1">
        <name>Mg(2+)</name>
        <dbReference type="ChEBI" id="CHEBI:18420"/>
    </cofactor>
    <text evidence="1">Binds 1 Mg(2+) ion per subunit.</text>
</comment>
<comment type="pathway">
    <text evidence="1">Cofactor biosynthesis; thiamine diphosphate biosynthesis; thiamine phosphate from 4-amino-2-methyl-5-diphosphomethylpyrimidine and 4-methyl-5-(2-phosphoethyl)-thiazole: step 1/1.</text>
</comment>
<comment type="similarity">
    <text evidence="1">Belongs to the thiamine-phosphate synthase family.</text>
</comment>
<accession>Q87VY6</accession>
<protein>
    <recommendedName>
        <fullName evidence="1">Thiamine-phosphate synthase</fullName>
        <shortName evidence="1">TP synthase</shortName>
        <shortName evidence="1">TPS</shortName>
        <ecNumber evidence="1">2.5.1.3</ecNumber>
    </recommendedName>
    <alternativeName>
        <fullName evidence="1">Thiamine-phosphate pyrophosphorylase</fullName>
        <shortName evidence="1">TMP pyrophosphorylase</shortName>
        <shortName evidence="1">TMP-PPase</shortName>
    </alternativeName>
</protein>
<feature type="chain" id="PRO_0000157037" description="Thiamine-phosphate synthase">
    <location>
        <begin position="1"/>
        <end position="205"/>
    </location>
</feature>
<feature type="binding site" evidence="1">
    <location>
        <begin position="35"/>
        <end position="39"/>
    </location>
    <ligand>
        <name>4-amino-2-methyl-5-(diphosphooxymethyl)pyrimidine</name>
        <dbReference type="ChEBI" id="CHEBI:57841"/>
    </ligand>
</feature>
<feature type="binding site" evidence="1">
    <location>
        <position position="67"/>
    </location>
    <ligand>
        <name>4-amino-2-methyl-5-(diphosphooxymethyl)pyrimidine</name>
        <dbReference type="ChEBI" id="CHEBI:57841"/>
    </ligand>
</feature>
<feature type="binding site" evidence="1">
    <location>
        <position position="68"/>
    </location>
    <ligand>
        <name>Mg(2+)</name>
        <dbReference type="ChEBI" id="CHEBI:18420"/>
    </ligand>
</feature>
<feature type="binding site" evidence="1">
    <location>
        <position position="86"/>
    </location>
    <ligand>
        <name>Mg(2+)</name>
        <dbReference type="ChEBI" id="CHEBI:18420"/>
    </ligand>
</feature>
<feature type="binding site" evidence="1">
    <location>
        <position position="105"/>
    </location>
    <ligand>
        <name>4-amino-2-methyl-5-(diphosphooxymethyl)pyrimidine</name>
        <dbReference type="ChEBI" id="CHEBI:57841"/>
    </ligand>
</feature>
<feature type="binding site" evidence="1">
    <location>
        <begin position="132"/>
        <end position="134"/>
    </location>
    <ligand>
        <name>2-[(2R,5Z)-2-carboxy-4-methylthiazol-5(2H)-ylidene]ethyl phosphate</name>
        <dbReference type="ChEBI" id="CHEBI:62899"/>
    </ligand>
</feature>
<feature type="binding site" evidence="1">
    <location>
        <position position="135"/>
    </location>
    <ligand>
        <name>4-amino-2-methyl-5-(diphosphooxymethyl)pyrimidine</name>
        <dbReference type="ChEBI" id="CHEBI:57841"/>
    </ligand>
</feature>
<feature type="binding site" evidence="1">
    <location>
        <position position="162"/>
    </location>
    <ligand>
        <name>2-[(2R,5Z)-2-carboxy-4-methylthiazol-5(2H)-ylidene]ethyl phosphate</name>
        <dbReference type="ChEBI" id="CHEBI:62899"/>
    </ligand>
</feature>
<sequence length="205" mass="22007">MKLRGLYAITDSQLLTGKFLSYVEAALDGGVTLLQYRDKTGDDSRRLREATELLKLCERYKTRLIINDDAELAARLGVGVHLGQTDGSLPDARALLGHKAIVGATCHGQLELAEQAKADGATYVAFGRFFNSQTKPGAPAVPLDLIAQVRARVHLPIAVIGGITLENAPQLVEHGADLLAVVHGLFGAETPQEVTRRAKAFMALL</sequence>
<dbReference type="EC" id="2.5.1.3" evidence="1"/>
<dbReference type="EMBL" id="AE016853">
    <property type="protein sequence ID" value="AAO58228.1"/>
    <property type="molecule type" value="Genomic_DNA"/>
</dbReference>
<dbReference type="RefSeq" id="NP_794533.1">
    <property type="nucleotide sequence ID" value="NC_004578.1"/>
</dbReference>
<dbReference type="RefSeq" id="WP_005763279.1">
    <property type="nucleotide sequence ID" value="NC_004578.1"/>
</dbReference>
<dbReference type="SMR" id="Q87VY6"/>
<dbReference type="STRING" id="223283.PSPTO_4799"/>
<dbReference type="GeneID" id="1186482"/>
<dbReference type="KEGG" id="pst:PSPTO_4799"/>
<dbReference type="PATRIC" id="fig|223283.9.peg.4910"/>
<dbReference type="eggNOG" id="COG0352">
    <property type="taxonomic scope" value="Bacteria"/>
</dbReference>
<dbReference type="HOGENOM" id="CLU_018272_3_1_6"/>
<dbReference type="OrthoDB" id="9789949at2"/>
<dbReference type="PhylomeDB" id="Q87VY6"/>
<dbReference type="UniPathway" id="UPA00060">
    <property type="reaction ID" value="UER00141"/>
</dbReference>
<dbReference type="PHI-base" id="PHI:123319"/>
<dbReference type="Proteomes" id="UP000002515">
    <property type="component" value="Chromosome"/>
</dbReference>
<dbReference type="GO" id="GO:0005737">
    <property type="term" value="C:cytoplasm"/>
    <property type="evidence" value="ECO:0007669"/>
    <property type="project" value="TreeGrafter"/>
</dbReference>
<dbReference type="GO" id="GO:0000287">
    <property type="term" value="F:magnesium ion binding"/>
    <property type="evidence" value="ECO:0007669"/>
    <property type="project" value="UniProtKB-UniRule"/>
</dbReference>
<dbReference type="GO" id="GO:0004789">
    <property type="term" value="F:thiamine-phosphate diphosphorylase activity"/>
    <property type="evidence" value="ECO:0007669"/>
    <property type="project" value="UniProtKB-UniRule"/>
</dbReference>
<dbReference type="GO" id="GO:0009228">
    <property type="term" value="P:thiamine biosynthetic process"/>
    <property type="evidence" value="ECO:0007669"/>
    <property type="project" value="UniProtKB-KW"/>
</dbReference>
<dbReference type="GO" id="GO:0009229">
    <property type="term" value="P:thiamine diphosphate biosynthetic process"/>
    <property type="evidence" value="ECO:0007669"/>
    <property type="project" value="UniProtKB-UniRule"/>
</dbReference>
<dbReference type="CDD" id="cd00564">
    <property type="entry name" value="TMP_TenI"/>
    <property type="match status" value="1"/>
</dbReference>
<dbReference type="Gene3D" id="3.20.20.70">
    <property type="entry name" value="Aldolase class I"/>
    <property type="match status" value="1"/>
</dbReference>
<dbReference type="HAMAP" id="MF_00097">
    <property type="entry name" value="TMP_synthase"/>
    <property type="match status" value="1"/>
</dbReference>
<dbReference type="InterPro" id="IPR013785">
    <property type="entry name" value="Aldolase_TIM"/>
</dbReference>
<dbReference type="InterPro" id="IPR036206">
    <property type="entry name" value="ThiamineP_synth_sf"/>
</dbReference>
<dbReference type="InterPro" id="IPR022998">
    <property type="entry name" value="ThiamineP_synth_TenI"/>
</dbReference>
<dbReference type="InterPro" id="IPR034291">
    <property type="entry name" value="TMP_synthase"/>
</dbReference>
<dbReference type="NCBIfam" id="TIGR00693">
    <property type="entry name" value="thiE"/>
    <property type="match status" value="1"/>
</dbReference>
<dbReference type="PANTHER" id="PTHR20857">
    <property type="entry name" value="THIAMINE-PHOSPHATE PYROPHOSPHORYLASE"/>
    <property type="match status" value="1"/>
</dbReference>
<dbReference type="PANTHER" id="PTHR20857:SF15">
    <property type="entry name" value="THIAMINE-PHOSPHATE SYNTHASE"/>
    <property type="match status" value="1"/>
</dbReference>
<dbReference type="Pfam" id="PF02581">
    <property type="entry name" value="TMP-TENI"/>
    <property type="match status" value="1"/>
</dbReference>
<dbReference type="SUPFAM" id="SSF51391">
    <property type="entry name" value="Thiamin phosphate synthase"/>
    <property type="match status" value="1"/>
</dbReference>
<reference key="1">
    <citation type="journal article" date="2003" name="Proc. Natl. Acad. Sci. U.S.A.">
        <title>The complete genome sequence of the Arabidopsis and tomato pathogen Pseudomonas syringae pv. tomato DC3000.</title>
        <authorList>
            <person name="Buell C.R."/>
            <person name="Joardar V."/>
            <person name="Lindeberg M."/>
            <person name="Selengut J."/>
            <person name="Paulsen I.T."/>
            <person name="Gwinn M.L."/>
            <person name="Dodson R.J."/>
            <person name="DeBoy R.T."/>
            <person name="Durkin A.S."/>
            <person name="Kolonay J.F."/>
            <person name="Madupu R."/>
            <person name="Daugherty S.C."/>
            <person name="Brinkac L.M."/>
            <person name="Beanan M.J."/>
            <person name="Haft D.H."/>
            <person name="Nelson W.C."/>
            <person name="Davidsen T.M."/>
            <person name="Zafar N."/>
            <person name="Zhou L."/>
            <person name="Liu J."/>
            <person name="Yuan Q."/>
            <person name="Khouri H.M."/>
            <person name="Fedorova N.B."/>
            <person name="Tran B."/>
            <person name="Russell D."/>
            <person name="Berry K.J."/>
            <person name="Utterback T.R."/>
            <person name="Van Aken S.E."/>
            <person name="Feldblyum T.V."/>
            <person name="D'Ascenzo M."/>
            <person name="Deng W.-L."/>
            <person name="Ramos A.R."/>
            <person name="Alfano J.R."/>
            <person name="Cartinhour S."/>
            <person name="Chatterjee A.K."/>
            <person name="Delaney T.P."/>
            <person name="Lazarowitz S.G."/>
            <person name="Martin G.B."/>
            <person name="Schneider D.J."/>
            <person name="Tang X."/>
            <person name="Bender C.L."/>
            <person name="White O."/>
            <person name="Fraser C.M."/>
            <person name="Collmer A."/>
        </authorList>
    </citation>
    <scope>NUCLEOTIDE SEQUENCE [LARGE SCALE GENOMIC DNA]</scope>
    <source>
        <strain>ATCC BAA-871 / DC3000</strain>
    </source>
</reference>
<organism>
    <name type="scientific">Pseudomonas syringae pv. tomato (strain ATCC BAA-871 / DC3000)</name>
    <dbReference type="NCBI Taxonomy" id="223283"/>
    <lineage>
        <taxon>Bacteria</taxon>
        <taxon>Pseudomonadati</taxon>
        <taxon>Pseudomonadota</taxon>
        <taxon>Gammaproteobacteria</taxon>
        <taxon>Pseudomonadales</taxon>
        <taxon>Pseudomonadaceae</taxon>
        <taxon>Pseudomonas</taxon>
    </lineage>
</organism>
<name>THIE_PSESM</name>
<proteinExistence type="inferred from homology"/>
<keyword id="KW-0460">Magnesium</keyword>
<keyword id="KW-0479">Metal-binding</keyword>
<keyword id="KW-1185">Reference proteome</keyword>
<keyword id="KW-0784">Thiamine biosynthesis</keyword>
<keyword id="KW-0808">Transferase</keyword>
<evidence type="ECO:0000255" key="1">
    <source>
        <dbReference type="HAMAP-Rule" id="MF_00097"/>
    </source>
</evidence>
<gene>
    <name evidence="1" type="primary">thiE</name>
    <name type="ordered locus">PSPTO_4799</name>
</gene>